<feature type="chain" id="PRO_0000078968" description="Non-structural protein 1">
    <location>
        <begin position="1"/>
        <end position="281"/>
    </location>
</feature>
<feature type="region of interest" description="G1P2-binding">
    <location>
        <begin position="1"/>
        <end position="103"/>
    </location>
</feature>
<feature type="region of interest" description="RNA-binding and homodimerization" evidence="1">
    <location>
        <begin position="1"/>
        <end position="93"/>
    </location>
</feature>
<feature type="short sequence motif" description="Nuclear localization signal" evidence="1">
    <location>
        <begin position="50"/>
        <end position="55"/>
    </location>
</feature>
<dbReference type="EMBL" id="M19794">
    <property type="protein sequence ID" value="AAA43772.1"/>
    <property type="status" value="ALT_INIT"/>
    <property type="molecule type" value="Genomic_RNA"/>
</dbReference>
<dbReference type="SMR" id="P12599"/>
<dbReference type="GO" id="GO:0030430">
    <property type="term" value="C:host cell cytoplasm"/>
    <property type="evidence" value="ECO:0007669"/>
    <property type="project" value="UniProtKB-SubCell"/>
</dbReference>
<dbReference type="GO" id="GO:0042025">
    <property type="term" value="C:host cell nucleus"/>
    <property type="evidence" value="ECO:0007669"/>
    <property type="project" value="UniProtKB-SubCell"/>
</dbReference>
<dbReference type="GO" id="GO:0030291">
    <property type="term" value="F:protein serine/threonine kinase inhibitor activity"/>
    <property type="evidence" value="ECO:0007669"/>
    <property type="project" value="UniProtKB-KW"/>
</dbReference>
<dbReference type="GO" id="GO:0003723">
    <property type="term" value="F:RNA binding"/>
    <property type="evidence" value="ECO:0007669"/>
    <property type="project" value="UniProtKB-KW"/>
</dbReference>
<dbReference type="GO" id="GO:0039579">
    <property type="term" value="P:symbiont-mediated suppression of host ISG15-protein conjugation"/>
    <property type="evidence" value="ECO:0007669"/>
    <property type="project" value="UniProtKB-KW"/>
</dbReference>
<dbReference type="GO" id="GO:0039580">
    <property type="term" value="P:symbiont-mediated suppression of host PKR/eIFalpha signaling"/>
    <property type="evidence" value="ECO:0007669"/>
    <property type="project" value="UniProtKB-KW"/>
</dbReference>
<dbReference type="GO" id="GO:0039502">
    <property type="term" value="P:symbiont-mediated suppression of host type I interferon-mediated signaling pathway"/>
    <property type="evidence" value="ECO:0007669"/>
    <property type="project" value="UniProtKB-KW"/>
</dbReference>
<dbReference type="Gene3D" id="1.10.287.10">
    <property type="entry name" value="S15/NS1, RNA-binding"/>
    <property type="match status" value="1"/>
</dbReference>
<dbReference type="HAMAP" id="MF_04066">
    <property type="entry name" value="INFV_NS1"/>
    <property type="match status" value="1"/>
</dbReference>
<dbReference type="InterPro" id="IPR004208">
    <property type="entry name" value="NS1"/>
</dbReference>
<dbReference type="InterPro" id="IPR009068">
    <property type="entry name" value="uS15_NS1_RNA-bd_sf"/>
</dbReference>
<dbReference type="Pfam" id="PF02942">
    <property type="entry name" value="Flu_B_NS1"/>
    <property type="match status" value="1"/>
</dbReference>
<dbReference type="PIRSF" id="PIRSF003938">
    <property type="entry name" value="Flu_B_NS1"/>
    <property type="match status" value="1"/>
</dbReference>
<dbReference type="SUPFAM" id="SSF47060">
    <property type="entry name" value="S15/NS1 RNA-binding domain"/>
    <property type="match status" value="1"/>
</dbReference>
<organismHost>
    <name type="scientific">Homo sapiens</name>
    <name type="common">Human</name>
    <dbReference type="NCBI Taxonomy" id="9606"/>
</organismHost>
<reference key="1">
    <citation type="journal article" date="1988" name="Virology">
        <title>Influenza B virus evolution: co-circulating lineages and comparison of evolutionary pattern with those of influenza A and C viruses.</title>
        <authorList>
            <person name="Yamashita M."/>
            <person name="Krystal M."/>
            <person name="Fitch W.M."/>
            <person name="Palese P."/>
        </authorList>
    </citation>
    <scope>NUCLEOTIDE SEQUENCE [GENOMIC RNA]</scope>
</reference>
<reference key="2">
    <citation type="journal article" date="2003" name="Virology">
        <title>Intracellular warfare between human influenza viruses and human cells: the roles of the viral NS1 protein.</title>
        <authorList>
            <person name="Krug R.M."/>
            <person name="Yuan W."/>
            <person name="Noah D.L."/>
            <person name="Latham A.G."/>
        </authorList>
    </citation>
    <scope>REVIEW</scope>
</reference>
<evidence type="ECO:0000255" key="1">
    <source>
        <dbReference type="HAMAP-Rule" id="MF_04066"/>
    </source>
</evidence>
<evidence type="ECO:0000305" key="2"/>
<organism>
    <name type="scientific">Influenza B virus (strain B/RU/1969)</name>
    <dbReference type="NCBI Taxonomy" id="11543"/>
    <lineage>
        <taxon>Viruses</taxon>
        <taxon>Riboviria</taxon>
        <taxon>Orthornavirae</taxon>
        <taxon>Negarnaviricota</taxon>
        <taxon>Polyploviricotina</taxon>
        <taxon>Insthoviricetes</taxon>
        <taxon>Articulavirales</taxon>
        <taxon>Orthomyxoviridae</taxon>
        <taxon>Betainfluenzavirus</taxon>
        <taxon>Betainfluenzavirus influenzae</taxon>
        <taxon>Influenza B virus</taxon>
    </lineage>
</organism>
<keyword id="KW-0025">Alternative splicing</keyword>
<keyword id="KW-1035">Host cytoplasm</keyword>
<keyword id="KW-1048">Host nucleus</keyword>
<keyword id="KW-0945">Host-virus interaction</keyword>
<keyword id="KW-1090">Inhibition of host innate immune response by virus</keyword>
<keyword id="KW-1114">Inhibition of host interferon signaling pathway by virus</keyword>
<keyword id="KW-1095">Inhibition of host ISG15 by virus</keyword>
<keyword id="KW-1102">Inhibition of host PKR by virus</keyword>
<keyword id="KW-0922">Interferon antiviral system evasion</keyword>
<keyword id="KW-0694">RNA-binding</keyword>
<keyword id="KW-0899">Viral immunoevasion</keyword>
<gene>
    <name evidence="1" type="primary">NS</name>
</gene>
<comment type="function">
    <text evidence="1">Binds and inhibits the conjugation of the ubiquitin-like G1P2/ISG15 protein to its target proteins. Since G1P2/ISG15 is an early antiviral protein, NS1 may inhibit the host antiviral response. Prevents EIF2AK2/PKR activation, either by binding double strand RNA or by interacting directly with EIF2AK2/PKR. Also binds poly(A) and U6 snRNA.</text>
</comment>
<comment type="subunit">
    <text evidence="1">Homodimer. Interacts with and inhibits human G1P2 conjugation by UBE1L.</text>
</comment>
<comment type="subcellular location">
    <subcellularLocation>
        <location evidence="1">Host cytoplasm</location>
    </subcellularLocation>
    <subcellularLocation>
        <location evidence="1">Host nucleus</location>
    </subcellularLocation>
</comment>
<comment type="alternative products">
    <event type="alternative splicing"/>
    <isoform>
        <id>P12599-1</id>
        <name>NS1</name>
        <sequence type="displayed"/>
    </isoform>
    <isoform>
        <id>P12599-2</id>
        <name>NEP</name>
        <name>NS2</name>
        <sequence type="not described"/>
    </isoform>
</comment>
<comment type="similarity">
    <text evidence="1">Belongs to the influenza B viruses NS1 family.</text>
</comment>
<comment type="sequence caution" evidence="2">
    <conflict type="erroneous initiation">
        <sequence resource="EMBL-CDS" id="AAA43772"/>
    </conflict>
</comment>
<accession>P12599</accession>
<sequence length="281" mass="31893">MADNMTTTQIEVGPGGTNATINFEAGILECYERLSWQRALDYPGQDRLNRLKRKLESRIKTHNKSEPESKRMSLEERKAIGVKMMKVLLFMNPSAGIEGFEPYSIKNSSTSNCPNCNWTDYPPTPGKCLDDIEEEPENVDDPTEIVLRDMNNKDARQKIKEEVNTQKEGKFRLTIKRDIRNVLSLRVLVNGTFLKHPNGYKSLSTLHRLNAYDQSGRLVAKLVATDDLTVEDEEDGHRILNSLFERFDEGHSKPIRAAETAVGVLSQFGQEHRLSPEEGDN</sequence>
<proteinExistence type="inferred from homology"/>
<name>NS1_INBRU</name>
<protein>
    <recommendedName>
        <fullName evidence="1">Non-structural protein 1</fullName>
        <shortName evidence="1">NS1</shortName>
    </recommendedName>
    <alternativeName>
        <fullName evidence="1">NS1A</fullName>
    </alternativeName>
</protein>